<gene>
    <name evidence="1" type="primary">frr</name>
    <name type="ordered locus">TP_0604</name>
</gene>
<evidence type="ECO:0000255" key="1">
    <source>
        <dbReference type="HAMAP-Rule" id="MF_00040"/>
    </source>
</evidence>
<protein>
    <recommendedName>
        <fullName evidence="1">Ribosome-recycling factor</fullName>
        <shortName evidence="1">RRF</shortName>
    </recommendedName>
    <alternativeName>
        <fullName evidence="1">Ribosome-releasing factor</fullName>
    </alternativeName>
</protein>
<comment type="function">
    <text evidence="1">Responsible for the release of ribosomes from messenger RNA at the termination of protein biosynthesis. May increase the efficiency of translation by recycling ribosomes from one round of translation to another.</text>
</comment>
<comment type="subcellular location">
    <subcellularLocation>
        <location evidence="1">Cytoplasm</location>
    </subcellularLocation>
</comment>
<comment type="similarity">
    <text evidence="1">Belongs to the RRF family.</text>
</comment>
<dbReference type="EMBL" id="AE000520">
    <property type="protein sequence ID" value="AAC65577.1"/>
    <property type="molecule type" value="Genomic_DNA"/>
</dbReference>
<dbReference type="PIR" id="F71304">
    <property type="entry name" value="F71304"/>
</dbReference>
<dbReference type="RefSeq" id="WP_010882050.1">
    <property type="nucleotide sequence ID" value="NC_021490.2"/>
</dbReference>
<dbReference type="SMR" id="O83613"/>
<dbReference type="IntAct" id="O83613">
    <property type="interactions" value="9"/>
</dbReference>
<dbReference type="STRING" id="243276.TP_0604"/>
<dbReference type="EnsemblBacteria" id="AAC65577">
    <property type="protein sequence ID" value="AAC65577"/>
    <property type="gene ID" value="TP_0604"/>
</dbReference>
<dbReference type="GeneID" id="93876371"/>
<dbReference type="KEGG" id="tpa:TP_0604"/>
<dbReference type="KEGG" id="tpw:TPANIC_0604"/>
<dbReference type="eggNOG" id="COG0233">
    <property type="taxonomic scope" value="Bacteria"/>
</dbReference>
<dbReference type="HOGENOM" id="CLU_073981_2_0_12"/>
<dbReference type="OrthoDB" id="9804006at2"/>
<dbReference type="Proteomes" id="UP000000811">
    <property type="component" value="Chromosome"/>
</dbReference>
<dbReference type="GO" id="GO:0005737">
    <property type="term" value="C:cytoplasm"/>
    <property type="evidence" value="ECO:0007669"/>
    <property type="project" value="UniProtKB-SubCell"/>
</dbReference>
<dbReference type="GO" id="GO:0043023">
    <property type="term" value="F:ribosomal large subunit binding"/>
    <property type="evidence" value="ECO:0007669"/>
    <property type="project" value="TreeGrafter"/>
</dbReference>
<dbReference type="GO" id="GO:0006415">
    <property type="term" value="P:translational termination"/>
    <property type="evidence" value="ECO:0007669"/>
    <property type="project" value="UniProtKB-UniRule"/>
</dbReference>
<dbReference type="CDD" id="cd00520">
    <property type="entry name" value="RRF"/>
    <property type="match status" value="1"/>
</dbReference>
<dbReference type="FunFam" id="1.10.132.20:FF:000001">
    <property type="entry name" value="Ribosome-recycling factor"/>
    <property type="match status" value="1"/>
</dbReference>
<dbReference type="FunFam" id="3.30.1360.40:FF:000001">
    <property type="entry name" value="Ribosome-recycling factor"/>
    <property type="match status" value="1"/>
</dbReference>
<dbReference type="Gene3D" id="3.30.1360.40">
    <property type="match status" value="1"/>
</dbReference>
<dbReference type="Gene3D" id="1.10.132.20">
    <property type="entry name" value="Ribosome-recycling factor"/>
    <property type="match status" value="1"/>
</dbReference>
<dbReference type="HAMAP" id="MF_00040">
    <property type="entry name" value="RRF"/>
    <property type="match status" value="1"/>
</dbReference>
<dbReference type="InterPro" id="IPR002661">
    <property type="entry name" value="Ribosome_recyc_fac"/>
</dbReference>
<dbReference type="InterPro" id="IPR023584">
    <property type="entry name" value="Ribosome_recyc_fac_dom"/>
</dbReference>
<dbReference type="InterPro" id="IPR036191">
    <property type="entry name" value="RRF_sf"/>
</dbReference>
<dbReference type="NCBIfam" id="TIGR00496">
    <property type="entry name" value="frr"/>
    <property type="match status" value="1"/>
</dbReference>
<dbReference type="PANTHER" id="PTHR20982:SF3">
    <property type="entry name" value="MITOCHONDRIAL RIBOSOME RECYCLING FACTOR PSEUDO 1"/>
    <property type="match status" value="1"/>
</dbReference>
<dbReference type="PANTHER" id="PTHR20982">
    <property type="entry name" value="RIBOSOME RECYCLING FACTOR"/>
    <property type="match status" value="1"/>
</dbReference>
<dbReference type="Pfam" id="PF01765">
    <property type="entry name" value="RRF"/>
    <property type="match status" value="1"/>
</dbReference>
<dbReference type="SUPFAM" id="SSF55194">
    <property type="entry name" value="Ribosome recycling factor, RRF"/>
    <property type="match status" value="1"/>
</dbReference>
<keyword id="KW-0963">Cytoplasm</keyword>
<keyword id="KW-0648">Protein biosynthesis</keyword>
<keyword id="KW-1185">Reference proteome</keyword>
<name>RRF_TREPA</name>
<proteinExistence type="inferred from homology"/>
<organism>
    <name type="scientific">Treponema pallidum (strain Nichols)</name>
    <dbReference type="NCBI Taxonomy" id="243276"/>
    <lineage>
        <taxon>Bacteria</taxon>
        <taxon>Pseudomonadati</taxon>
        <taxon>Spirochaetota</taxon>
        <taxon>Spirochaetia</taxon>
        <taxon>Spirochaetales</taxon>
        <taxon>Treponemataceae</taxon>
        <taxon>Treponema</taxon>
    </lineage>
</organism>
<sequence length="183" mass="20504">MGIAECYEQKMKKSLSALQEGFNTLRTERATAHLLDQITVDYYQQPTALSQVATVSVPEARLIIIQPWDKTLLADIERAILKSKLSLNPSNDGKVIRLVIPPLTQERRKELVRQARALAEQARVAIRNIRREGIEEAKRGHKEGLLSEDALKAAEEAFQKATDASVADVARYLAEKEKDILEG</sequence>
<reference key="1">
    <citation type="journal article" date="1998" name="Science">
        <title>Complete genome sequence of Treponema pallidum, the syphilis spirochete.</title>
        <authorList>
            <person name="Fraser C.M."/>
            <person name="Norris S.J."/>
            <person name="Weinstock G.M."/>
            <person name="White O."/>
            <person name="Sutton G.G."/>
            <person name="Dodson R.J."/>
            <person name="Gwinn M.L."/>
            <person name="Hickey E.K."/>
            <person name="Clayton R.A."/>
            <person name="Ketchum K.A."/>
            <person name="Sodergren E."/>
            <person name="Hardham J.M."/>
            <person name="McLeod M.P."/>
            <person name="Salzberg S.L."/>
            <person name="Peterson J.D."/>
            <person name="Khalak H.G."/>
            <person name="Richardson D.L."/>
            <person name="Howell J.K."/>
            <person name="Chidambaram M."/>
            <person name="Utterback T.R."/>
            <person name="McDonald L.A."/>
            <person name="Artiach P."/>
            <person name="Bowman C."/>
            <person name="Cotton M.D."/>
            <person name="Fujii C."/>
            <person name="Garland S.A."/>
            <person name="Hatch B."/>
            <person name="Horst K."/>
            <person name="Roberts K.M."/>
            <person name="Sandusky M."/>
            <person name="Weidman J.F."/>
            <person name="Smith H.O."/>
            <person name="Venter J.C."/>
        </authorList>
    </citation>
    <scope>NUCLEOTIDE SEQUENCE [LARGE SCALE GENOMIC DNA]</scope>
    <source>
        <strain>Nichols</strain>
    </source>
</reference>
<accession>O83613</accession>
<feature type="chain" id="PRO_0000167570" description="Ribosome-recycling factor">
    <location>
        <begin position="1"/>
        <end position="183"/>
    </location>
</feature>